<comment type="function">
    <text evidence="1">Could be involved in insertion of integral membrane proteins into the membrane.</text>
</comment>
<comment type="subcellular location">
    <subcellularLocation>
        <location evidence="1">Cell membrane</location>
        <topology evidence="1">Peripheral membrane protein</topology>
        <orientation evidence="1">Cytoplasmic side</orientation>
    </subcellularLocation>
</comment>
<comment type="similarity">
    <text evidence="1">Belongs to the UPF0161 family.</text>
</comment>
<sequence length="80" mass="9355">MKRILIAPVRFYQRFISPVFPPSCRFELTCSNYMIQAIEKHGFKGVLMGLSRILRCHPWSKTGKDPVPDRFSLKRNQEGE</sequence>
<feature type="chain" id="PRO_1000197789" description="Putative membrane protein insertion efficiency factor">
    <location>
        <begin position="1"/>
        <end position="80"/>
    </location>
</feature>
<feature type="region of interest" description="Disordered" evidence="2">
    <location>
        <begin position="61"/>
        <end position="80"/>
    </location>
</feature>
<feature type="compositionally biased region" description="Basic and acidic residues" evidence="2">
    <location>
        <begin position="62"/>
        <end position="80"/>
    </location>
</feature>
<dbReference type="EMBL" id="CP000920">
    <property type="protein sequence ID" value="ACO21381.1"/>
    <property type="molecule type" value="Genomic_DNA"/>
</dbReference>
<dbReference type="KEGG" id="spp:SPP_1873"/>
<dbReference type="HOGENOM" id="CLU_144811_5_2_9"/>
<dbReference type="GO" id="GO:0005886">
    <property type="term" value="C:plasma membrane"/>
    <property type="evidence" value="ECO:0007669"/>
    <property type="project" value="UniProtKB-SubCell"/>
</dbReference>
<dbReference type="HAMAP" id="MF_00386">
    <property type="entry name" value="UPF0161_YidD"/>
    <property type="match status" value="1"/>
</dbReference>
<dbReference type="InterPro" id="IPR002696">
    <property type="entry name" value="Membr_insert_effic_factor_YidD"/>
</dbReference>
<dbReference type="NCBIfam" id="TIGR00278">
    <property type="entry name" value="membrane protein insertion efficiency factor YidD"/>
    <property type="match status" value="1"/>
</dbReference>
<dbReference type="PANTHER" id="PTHR33383">
    <property type="entry name" value="MEMBRANE PROTEIN INSERTION EFFICIENCY FACTOR-RELATED"/>
    <property type="match status" value="1"/>
</dbReference>
<dbReference type="PANTHER" id="PTHR33383:SF1">
    <property type="entry name" value="MEMBRANE PROTEIN INSERTION EFFICIENCY FACTOR-RELATED"/>
    <property type="match status" value="1"/>
</dbReference>
<dbReference type="Pfam" id="PF01809">
    <property type="entry name" value="YidD"/>
    <property type="match status" value="1"/>
</dbReference>
<dbReference type="SMART" id="SM01234">
    <property type="entry name" value="Haemolytic"/>
    <property type="match status" value="1"/>
</dbReference>
<proteinExistence type="inferred from homology"/>
<organism>
    <name type="scientific">Streptococcus pneumoniae (strain P1031)</name>
    <dbReference type="NCBI Taxonomy" id="488223"/>
    <lineage>
        <taxon>Bacteria</taxon>
        <taxon>Bacillati</taxon>
        <taxon>Bacillota</taxon>
        <taxon>Bacilli</taxon>
        <taxon>Lactobacillales</taxon>
        <taxon>Streptococcaceae</taxon>
        <taxon>Streptococcus</taxon>
    </lineage>
</organism>
<evidence type="ECO:0000255" key="1">
    <source>
        <dbReference type="HAMAP-Rule" id="MF_00386"/>
    </source>
</evidence>
<evidence type="ECO:0000256" key="2">
    <source>
        <dbReference type="SAM" id="MobiDB-lite"/>
    </source>
</evidence>
<reference key="1">
    <citation type="journal article" date="2010" name="Genome Biol.">
        <title>Structure and dynamics of the pan-genome of Streptococcus pneumoniae and closely related species.</title>
        <authorList>
            <person name="Donati C."/>
            <person name="Hiller N.L."/>
            <person name="Tettelin H."/>
            <person name="Muzzi A."/>
            <person name="Croucher N.J."/>
            <person name="Angiuoli S.V."/>
            <person name="Oggioni M."/>
            <person name="Dunning Hotopp J.C."/>
            <person name="Hu F.Z."/>
            <person name="Riley D.R."/>
            <person name="Covacci A."/>
            <person name="Mitchell T.J."/>
            <person name="Bentley S.D."/>
            <person name="Kilian M."/>
            <person name="Ehrlich G.D."/>
            <person name="Rappuoli R."/>
            <person name="Moxon E.R."/>
            <person name="Masignani V."/>
        </authorList>
    </citation>
    <scope>NUCLEOTIDE SEQUENCE [LARGE SCALE GENOMIC DNA]</scope>
    <source>
        <strain>P1031</strain>
    </source>
</reference>
<keyword id="KW-1003">Cell membrane</keyword>
<keyword id="KW-0472">Membrane</keyword>
<gene>
    <name type="ordered locus">SPP_1873</name>
</gene>
<name>YIDD_STRZP</name>
<protein>
    <recommendedName>
        <fullName evidence="1">Putative membrane protein insertion efficiency factor</fullName>
    </recommendedName>
</protein>
<accession>C1CMI3</accession>